<sequence length="321" mass="34718">MTKYALVGDVGGTNARLALCDIDTGEISQAKTYSGLDYPSLEAVVRVYLDEHQVGVEDGCIAIACPITGDWVAMTNHTWAFSIAEMKKNLGFAHLEIINDFTAVSMAIPMLKPEHLIQFGGAEPVEGKPIAVYGAGTGLGVSHLVHVDKRWISLPGEGGHVDFAPNSEEEGIILHELRAELGHVSAERVLSGPGLVYLYRAIVKSDNRLPENLQPKDITERALADSCTDCRRALSLFCVIMGRFGGNLALNLGTFGGVYIAGGIVPRFLEFFKASGFRGGFEDKGRFKSYVQDIPVYLIVHDNPGLLGSGAHLRQTLGQYL</sequence>
<gene>
    <name evidence="1" type="primary">glk</name>
    <name type="ordered locus">Ent638_2921</name>
</gene>
<evidence type="ECO:0000255" key="1">
    <source>
        <dbReference type="HAMAP-Rule" id="MF_00524"/>
    </source>
</evidence>
<name>GLK_ENT38</name>
<keyword id="KW-0067">ATP-binding</keyword>
<keyword id="KW-0963">Cytoplasm</keyword>
<keyword id="KW-0324">Glycolysis</keyword>
<keyword id="KW-0418">Kinase</keyword>
<keyword id="KW-0547">Nucleotide-binding</keyword>
<keyword id="KW-0808">Transferase</keyword>
<protein>
    <recommendedName>
        <fullName evidence="1">Glucokinase</fullName>
        <ecNumber evidence="1">2.7.1.2</ecNumber>
    </recommendedName>
    <alternativeName>
        <fullName evidence="1">Glucose kinase</fullName>
    </alternativeName>
</protein>
<feature type="chain" id="PRO_1000060925" description="Glucokinase">
    <location>
        <begin position="1"/>
        <end position="321"/>
    </location>
</feature>
<feature type="binding site" evidence="1">
    <location>
        <begin position="8"/>
        <end position="13"/>
    </location>
    <ligand>
        <name>ATP</name>
        <dbReference type="ChEBI" id="CHEBI:30616"/>
    </ligand>
</feature>
<organism>
    <name type="scientific">Enterobacter sp. (strain 638)</name>
    <dbReference type="NCBI Taxonomy" id="399742"/>
    <lineage>
        <taxon>Bacteria</taxon>
        <taxon>Pseudomonadati</taxon>
        <taxon>Pseudomonadota</taxon>
        <taxon>Gammaproteobacteria</taxon>
        <taxon>Enterobacterales</taxon>
        <taxon>Enterobacteriaceae</taxon>
        <taxon>Enterobacter</taxon>
    </lineage>
</organism>
<comment type="catalytic activity">
    <reaction evidence="1">
        <text>D-glucose + ATP = D-glucose 6-phosphate + ADP + H(+)</text>
        <dbReference type="Rhea" id="RHEA:17825"/>
        <dbReference type="ChEBI" id="CHEBI:4167"/>
        <dbReference type="ChEBI" id="CHEBI:15378"/>
        <dbReference type="ChEBI" id="CHEBI:30616"/>
        <dbReference type="ChEBI" id="CHEBI:61548"/>
        <dbReference type="ChEBI" id="CHEBI:456216"/>
        <dbReference type="EC" id="2.7.1.2"/>
    </reaction>
</comment>
<comment type="subcellular location">
    <subcellularLocation>
        <location evidence="1">Cytoplasm</location>
    </subcellularLocation>
</comment>
<comment type="similarity">
    <text evidence="1">Belongs to the bacterial glucokinase family.</text>
</comment>
<dbReference type="EC" id="2.7.1.2" evidence="1"/>
<dbReference type="EMBL" id="CP000653">
    <property type="protein sequence ID" value="ABP61585.1"/>
    <property type="molecule type" value="Genomic_DNA"/>
</dbReference>
<dbReference type="RefSeq" id="WP_015959918.1">
    <property type="nucleotide sequence ID" value="NC_009436.1"/>
</dbReference>
<dbReference type="SMR" id="A4WD05"/>
<dbReference type="STRING" id="399742.Ent638_2921"/>
<dbReference type="KEGG" id="ent:Ent638_2921"/>
<dbReference type="eggNOG" id="COG0837">
    <property type="taxonomic scope" value="Bacteria"/>
</dbReference>
<dbReference type="HOGENOM" id="CLU_042582_1_0_6"/>
<dbReference type="OrthoDB" id="9800595at2"/>
<dbReference type="Proteomes" id="UP000000230">
    <property type="component" value="Chromosome"/>
</dbReference>
<dbReference type="GO" id="GO:0005829">
    <property type="term" value="C:cytosol"/>
    <property type="evidence" value="ECO:0007669"/>
    <property type="project" value="TreeGrafter"/>
</dbReference>
<dbReference type="GO" id="GO:0005524">
    <property type="term" value="F:ATP binding"/>
    <property type="evidence" value="ECO:0007669"/>
    <property type="project" value="UniProtKB-UniRule"/>
</dbReference>
<dbReference type="GO" id="GO:0005536">
    <property type="term" value="F:D-glucose binding"/>
    <property type="evidence" value="ECO:0007669"/>
    <property type="project" value="InterPro"/>
</dbReference>
<dbReference type="GO" id="GO:0004340">
    <property type="term" value="F:glucokinase activity"/>
    <property type="evidence" value="ECO:0007669"/>
    <property type="project" value="UniProtKB-UniRule"/>
</dbReference>
<dbReference type="GO" id="GO:0006096">
    <property type="term" value="P:glycolytic process"/>
    <property type="evidence" value="ECO:0007669"/>
    <property type="project" value="UniProtKB-UniRule"/>
</dbReference>
<dbReference type="CDD" id="cd24008">
    <property type="entry name" value="ASKHA_NBD_GLK"/>
    <property type="match status" value="1"/>
</dbReference>
<dbReference type="FunFam" id="3.30.420.40:FF:000045">
    <property type="entry name" value="Glucokinase"/>
    <property type="match status" value="1"/>
</dbReference>
<dbReference type="FunFam" id="3.40.367.20:FF:000002">
    <property type="entry name" value="Glucokinase"/>
    <property type="match status" value="1"/>
</dbReference>
<dbReference type="Gene3D" id="3.30.420.40">
    <property type="match status" value="1"/>
</dbReference>
<dbReference type="Gene3D" id="3.40.367.20">
    <property type="match status" value="1"/>
</dbReference>
<dbReference type="HAMAP" id="MF_00524">
    <property type="entry name" value="Glucokinase"/>
    <property type="match status" value="1"/>
</dbReference>
<dbReference type="InterPro" id="IPR043129">
    <property type="entry name" value="ATPase_NBD"/>
</dbReference>
<dbReference type="InterPro" id="IPR050201">
    <property type="entry name" value="Bacterial_glucokinase"/>
</dbReference>
<dbReference type="InterPro" id="IPR003836">
    <property type="entry name" value="Glucokinase"/>
</dbReference>
<dbReference type="NCBIfam" id="TIGR00749">
    <property type="entry name" value="glk"/>
    <property type="match status" value="1"/>
</dbReference>
<dbReference type="NCBIfam" id="NF001414">
    <property type="entry name" value="PRK00292.1-1"/>
    <property type="match status" value="1"/>
</dbReference>
<dbReference type="NCBIfam" id="NF001416">
    <property type="entry name" value="PRK00292.1-3"/>
    <property type="match status" value="1"/>
</dbReference>
<dbReference type="PANTHER" id="PTHR47690">
    <property type="entry name" value="GLUCOKINASE"/>
    <property type="match status" value="1"/>
</dbReference>
<dbReference type="PANTHER" id="PTHR47690:SF1">
    <property type="entry name" value="GLUCOKINASE"/>
    <property type="match status" value="1"/>
</dbReference>
<dbReference type="Pfam" id="PF02685">
    <property type="entry name" value="Glucokinase"/>
    <property type="match status" value="1"/>
</dbReference>
<dbReference type="SUPFAM" id="SSF53067">
    <property type="entry name" value="Actin-like ATPase domain"/>
    <property type="match status" value="1"/>
</dbReference>
<reference key="1">
    <citation type="journal article" date="2010" name="PLoS Genet.">
        <title>Genome sequence of the plant growth promoting endophytic bacterium Enterobacter sp. 638.</title>
        <authorList>
            <person name="Taghavi S."/>
            <person name="van der Lelie D."/>
            <person name="Hoffman A."/>
            <person name="Zhang Y.B."/>
            <person name="Walla M.D."/>
            <person name="Vangronsveld J."/>
            <person name="Newman L."/>
            <person name="Monchy S."/>
        </authorList>
    </citation>
    <scope>NUCLEOTIDE SEQUENCE [LARGE SCALE GENOMIC DNA]</scope>
    <source>
        <strain>638</strain>
    </source>
</reference>
<accession>A4WD05</accession>
<proteinExistence type="inferred from homology"/>